<accession>P0A5J7</accession>
<accession>A0A1R3XYQ5</accession>
<accession>O54592</accession>
<accession>X2BH84</accession>
<feature type="chain" id="PRO_0000113381" description="Malate dehydrogenase">
    <location>
        <begin position="1"/>
        <end position="329"/>
    </location>
</feature>
<feature type="active site" description="Proton acceptor" evidence="1">
    <location>
        <position position="188"/>
    </location>
</feature>
<feature type="binding site" evidence="1">
    <location>
        <begin position="12"/>
        <end position="18"/>
    </location>
    <ligand>
        <name>NAD(+)</name>
        <dbReference type="ChEBI" id="CHEBI:57540"/>
    </ligand>
</feature>
<feature type="binding site" evidence="1">
    <location>
        <position position="93"/>
    </location>
    <ligand>
        <name>substrate</name>
    </ligand>
</feature>
<feature type="binding site" evidence="1">
    <location>
        <position position="99"/>
    </location>
    <ligand>
        <name>substrate</name>
    </ligand>
</feature>
<feature type="binding site" evidence="1">
    <location>
        <position position="106"/>
    </location>
    <ligand>
        <name>NAD(+)</name>
        <dbReference type="ChEBI" id="CHEBI:57540"/>
    </ligand>
</feature>
<feature type="binding site" evidence="1">
    <location>
        <position position="113"/>
    </location>
    <ligand>
        <name>NAD(+)</name>
        <dbReference type="ChEBI" id="CHEBI:57540"/>
    </ligand>
</feature>
<feature type="binding site" evidence="1">
    <location>
        <begin position="130"/>
        <end position="132"/>
    </location>
    <ligand>
        <name>NAD(+)</name>
        <dbReference type="ChEBI" id="CHEBI:57540"/>
    </ligand>
</feature>
<feature type="binding site" evidence="1">
    <location>
        <position position="132"/>
    </location>
    <ligand>
        <name>substrate</name>
    </ligand>
</feature>
<feature type="binding site" evidence="1">
    <location>
        <position position="163"/>
    </location>
    <ligand>
        <name>substrate</name>
    </ligand>
</feature>
<protein>
    <recommendedName>
        <fullName evidence="1">Malate dehydrogenase</fullName>
        <ecNumber evidence="1">1.1.1.37</ecNumber>
    </recommendedName>
</protein>
<keyword id="KW-0520">NAD</keyword>
<keyword id="KW-0560">Oxidoreductase</keyword>
<keyword id="KW-1185">Reference proteome</keyword>
<keyword id="KW-0816">Tricarboxylic acid cycle</keyword>
<reference key="1">
    <citation type="submission" date="1998-01" db="EMBL/GenBank/DDBJ databases">
        <authorList>
            <person name="Miesel L."/>
            <person name="Weisbrod T."/>
            <person name="Doshi P."/>
            <person name="Bittman R."/>
            <person name="Marcinkeviciene J.A."/>
            <person name="Sacchettini J.C."/>
            <person name="Jacobs W.R. Jr."/>
        </authorList>
    </citation>
    <scope>NUCLEOTIDE SEQUENCE [GENOMIC DNA]</scope>
    <source>
        <strain>BCG</strain>
    </source>
</reference>
<reference key="2">
    <citation type="journal article" date="2003" name="Proc. Natl. Acad. Sci. U.S.A.">
        <title>The complete genome sequence of Mycobacterium bovis.</title>
        <authorList>
            <person name="Garnier T."/>
            <person name="Eiglmeier K."/>
            <person name="Camus J.-C."/>
            <person name="Medina N."/>
            <person name="Mansoor H."/>
            <person name="Pryor M."/>
            <person name="Duthoy S."/>
            <person name="Grondin S."/>
            <person name="Lacroix C."/>
            <person name="Monsempe C."/>
            <person name="Simon S."/>
            <person name="Harris B."/>
            <person name="Atkin R."/>
            <person name="Doggett J."/>
            <person name="Mayes R."/>
            <person name="Keating L."/>
            <person name="Wheeler P.R."/>
            <person name="Parkhill J."/>
            <person name="Barrell B.G."/>
            <person name="Cole S.T."/>
            <person name="Gordon S.V."/>
            <person name="Hewinson R.G."/>
        </authorList>
    </citation>
    <scope>NUCLEOTIDE SEQUENCE [LARGE SCALE GENOMIC DNA]</scope>
    <source>
        <strain>ATCC BAA-935 / AF2122/97</strain>
    </source>
</reference>
<reference key="3">
    <citation type="journal article" date="2017" name="Genome Announc.">
        <title>Updated reference genome sequence and annotation of Mycobacterium bovis AF2122/97.</title>
        <authorList>
            <person name="Malone K.M."/>
            <person name="Farrell D."/>
            <person name="Stuber T.P."/>
            <person name="Schubert O.T."/>
            <person name="Aebersold R."/>
            <person name="Robbe-Austerman S."/>
            <person name="Gordon S.V."/>
        </authorList>
    </citation>
    <scope>NUCLEOTIDE SEQUENCE [LARGE SCALE GENOMIC DNA]</scope>
    <scope>GENOME REANNOTATION</scope>
    <source>
        <strain>ATCC BAA-935 / AF2122/97</strain>
    </source>
</reference>
<dbReference type="EC" id="1.1.1.37" evidence="1"/>
<dbReference type="EMBL" id="AF038422">
    <property type="protein sequence ID" value="AAC46301.1"/>
    <property type="molecule type" value="Genomic_DNA"/>
</dbReference>
<dbReference type="EMBL" id="LT708304">
    <property type="protein sequence ID" value="SIT99873.1"/>
    <property type="molecule type" value="Genomic_DNA"/>
</dbReference>
<dbReference type="RefSeq" id="NP_854926.1">
    <property type="nucleotide sequence ID" value="NC_002945.3"/>
</dbReference>
<dbReference type="RefSeq" id="WP_003406301.1">
    <property type="nucleotide sequence ID" value="NC_002945.4"/>
</dbReference>
<dbReference type="SMR" id="P0A5J7"/>
<dbReference type="KEGG" id="mbo:BQ2027_MB1272"/>
<dbReference type="PATRIC" id="fig|233413.5.peg.1395"/>
<dbReference type="Proteomes" id="UP000001419">
    <property type="component" value="Chromosome"/>
</dbReference>
<dbReference type="GO" id="GO:0030060">
    <property type="term" value="F:L-malate dehydrogenase (NAD+) activity"/>
    <property type="evidence" value="ECO:0007669"/>
    <property type="project" value="UniProtKB-UniRule"/>
</dbReference>
<dbReference type="GO" id="GO:0006108">
    <property type="term" value="P:malate metabolic process"/>
    <property type="evidence" value="ECO:0007669"/>
    <property type="project" value="InterPro"/>
</dbReference>
<dbReference type="GO" id="GO:0006099">
    <property type="term" value="P:tricarboxylic acid cycle"/>
    <property type="evidence" value="ECO:0007669"/>
    <property type="project" value="UniProtKB-UniRule"/>
</dbReference>
<dbReference type="CDD" id="cd01338">
    <property type="entry name" value="MDH_chloroplast-like"/>
    <property type="match status" value="1"/>
</dbReference>
<dbReference type="FunFam" id="3.40.50.720:FF:000010">
    <property type="entry name" value="Malate dehydrogenase"/>
    <property type="match status" value="1"/>
</dbReference>
<dbReference type="FunFam" id="3.90.110.10:FF:000002">
    <property type="entry name" value="Malate dehydrogenase"/>
    <property type="match status" value="1"/>
</dbReference>
<dbReference type="Gene3D" id="3.90.110.10">
    <property type="entry name" value="Lactate dehydrogenase/glycoside hydrolase, family 4, C-terminal"/>
    <property type="match status" value="1"/>
</dbReference>
<dbReference type="Gene3D" id="3.40.50.720">
    <property type="entry name" value="NAD(P)-binding Rossmann-like Domain"/>
    <property type="match status" value="1"/>
</dbReference>
<dbReference type="HAMAP" id="MF_01517">
    <property type="entry name" value="Malate_dehydrog_2"/>
    <property type="match status" value="1"/>
</dbReference>
<dbReference type="InterPro" id="IPR001557">
    <property type="entry name" value="L-lactate/malate_DH"/>
</dbReference>
<dbReference type="InterPro" id="IPR022383">
    <property type="entry name" value="Lactate/malate_DH_C"/>
</dbReference>
<dbReference type="InterPro" id="IPR001236">
    <property type="entry name" value="Lactate/malate_DH_N"/>
</dbReference>
<dbReference type="InterPro" id="IPR015955">
    <property type="entry name" value="Lactate_DH/Glyco_Ohase_4_C"/>
</dbReference>
<dbReference type="InterPro" id="IPR001252">
    <property type="entry name" value="Malate_DH_AS"/>
</dbReference>
<dbReference type="InterPro" id="IPR010945">
    <property type="entry name" value="Malate_DH_type2"/>
</dbReference>
<dbReference type="InterPro" id="IPR036291">
    <property type="entry name" value="NAD(P)-bd_dom_sf"/>
</dbReference>
<dbReference type="NCBIfam" id="TIGR01759">
    <property type="entry name" value="MalateDH-SF1"/>
    <property type="match status" value="1"/>
</dbReference>
<dbReference type="NCBIfam" id="NF003916">
    <property type="entry name" value="PRK05442.1"/>
    <property type="match status" value="1"/>
</dbReference>
<dbReference type="PANTHER" id="PTHR23382">
    <property type="entry name" value="MALATE DEHYDROGENASE"/>
    <property type="match status" value="1"/>
</dbReference>
<dbReference type="Pfam" id="PF02866">
    <property type="entry name" value="Ldh_1_C"/>
    <property type="match status" value="1"/>
</dbReference>
<dbReference type="Pfam" id="PF00056">
    <property type="entry name" value="Ldh_1_N"/>
    <property type="match status" value="1"/>
</dbReference>
<dbReference type="PIRSF" id="PIRSF000102">
    <property type="entry name" value="Lac_mal_DH"/>
    <property type="match status" value="1"/>
</dbReference>
<dbReference type="SUPFAM" id="SSF56327">
    <property type="entry name" value="LDH C-terminal domain-like"/>
    <property type="match status" value="1"/>
</dbReference>
<dbReference type="SUPFAM" id="SSF51735">
    <property type="entry name" value="NAD(P)-binding Rossmann-fold domains"/>
    <property type="match status" value="1"/>
</dbReference>
<dbReference type="PROSITE" id="PS00068">
    <property type="entry name" value="MDH"/>
    <property type="match status" value="1"/>
</dbReference>
<gene>
    <name evidence="1" type="primary">mdh</name>
    <name type="ordered locus">BQ2027_MB1272</name>
</gene>
<sequence>MSASPLKVAVTGAAGQIGYSLLFRLASGSLLGPDRPIELRLLEIEPALQALEGVVMELDDCAFPLLSGVEIGSDPQKIFDGVSLALLVGARPRGAGMERSDLLEANGAIFTAQGKALNAVAADDVRVGVTGNPANTNALIAMTNAPDIPRERFSALTRLDHNRAISQLAAKTGAAVTDIKKMTIWGNHSATQYPDLFHAEVAGKNAAEVVNDQAWIEDEFIPTVAKRGAAIIDARGASSAASAASATIDAARDWLLGTPADDWVSMAVVSDGSYGVPEGLISSFPVTTKGGNWTIVSGLEIDEFSRGRIDKSTAELADERSAVTELGLI</sequence>
<name>MDH_MYCBO</name>
<comment type="function">
    <text evidence="1">Catalyzes the reversible oxidation of malate to oxaloacetate.</text>
</comment>
<comment type="catalytic activity">
    <reaction evidence="1">
        <text>(S)-malate + NAD(+) = oxaloacetate + NADH + H(+)</text>
        <dbReference type="Rhea" id="RHEA:21432"/>
        <dbReference type="ChEBI" id="CHEBI:15378"/>
        <dbReference type="ChEBI" id="CHEBI:15589"/>
        <dbReference type="ChEBI" id="CHEBI:16452"/>
        <dbReference type="ChEBI" id="CHEBI:57540"/>
        <dbReference type="ChEBI" id="CHEBI:57945"/>
        <dbReference type="EC" id="1.1.1.37"/>
    </reaction>
</comment>
<comment type="similarity">
    <text evidence="1">Belongs to the LDH/MDH superfamily. MDH type 2 family.</text>
</comment>
<proteinExistence type="inferred from homology"/>
<organism>
    <name type="scientific">Mycobacterium bovis (strain ATCC BAA-935 / AF2122/97)</name>
    <dbReference type="NCBI Taxonomy" id="233413"/>
    <lineage>
        <taxon>Bacteria</taxon>
        <taxon>Bacillati</taxon>
        <taxon>Actinomycetota</taxon>
        <taxon>Actinomycetes</taxon>
        <taxon>Mycobacteriales</taxon>
        <taxon>Mycobacteriaceae</taxon>
        <taxon>Mycobacterium</taxon>
        <taxon>Mycobacterium tuberculosis complex</taxon>
    </lineage>
</organism>
<evidence type="ECO:0000255" key="1">
    <source>
        <dbReference type="HAMAP-Rule" id="MF_01517"/>
    </source>
</evidence>